<comment type="function">
    <text evidence="1">One of the primary rRNA binding proteins, it binds directly near the 3'-end of the 23S rRNA, where it nucleates assembly of the 50S subunit.</text>
</comment>
<comment type="subunit">
    <text evidence="1">Part of the 50S ribosomal subunit. Forms a cluster with proteins L14 and L19.</text>
</comment>
<comment type="similarity">
    <text evidence="1">Belongs to the universal ribosomal protein uL3 family.</text>
</comment>
<keyword id="KW-0687">Ribonucleoprotein</keyword>
<keyword id="KW-0689">Ribosomal protein</keyword>
<keyword id="KW-0694">RNA-binding</keyword>
<keyword id="KW-0699">rRNA-binding</keyword>
<sequence length="210" mass="22627">MARKGILGKKVGMTQVFTDNGELVPVTVVDVTPNVVMQVKTVESDGYEAVQLGYGDMREVLTNKPSVGHAKKADTTPKRFVREIRDVALSDYEIGSEVKADEFAAGDIVDVTGTSKGHGYQGNIKKDGQSRGPMAHGSRYHRRPGSLGAIINKVFKGKKLPGRMGNHTRTMQNLQVVAADTEHNVLLIKGNVPGANKSFVTIRSAVKAAK</sequence>
<dbReference type="EMBL" id="FM177140">
    <property type="protein sequence ID" value="CAQ67736.1"/>
    <property type="molecule type" value="Genomic_DNA"/>
</dbReference>
<dbReference type="SMR" id="B3WAL7"/>
<dbReference type="KEGG" id="lcb:LCABL_26700"/>
<dbReference type="HOGENOM" id="CLU_044142_4_1_9"/>
<dbReference type="GO" id="GO:0022625">
    <property type="term" value="C:cytosolic large ribosomal subunit"/>
    <property type="evidence" value="ECO:0007669"/>
    <property type="project" value="TreeGrafter"/>
</dbReference>
<dbReference type="GO" id="GO:0019843">
    <property type="term" value="F:rRNA binding"/>
    <property type="evidence" value="ECO:0007669"/>
    <property type="project" value="UniProtKB-UniRule"/>
</dbReference>
<dbReference type="GO" id="GO:0003735">
    <property type="term" value="F:structural constituent of ribosome"/>
    <property type="evidence" value="ECO:0007669"/>
    <property type="project" value="InterPro"/>
</dbReference>
<dbReference type="GO" id="GO:0006412">
    <property type="term" value="P:translation"/>
    <property type="evidence" value="ECO:0007669"/>
    <property type="project" value="UniProtKB-UniRule"/>
</dbReference>
<dbReference type="FunFam" id="2.40.30.10:FF:000004">
    <property type="entry name" value="50S ribosomal protein L3"/>
    <property type="match status" value="1"/>
</dbReference>
<dbReference type="FunFam" id="3.30.160.810:FF:000002">
    <property type="entry name" value="50S ribosomal protein L3"/>
    <property type="match status" value="1"/>
</dbReference>
<dbReference type="Gene3D" id="3.30.160.810">
    <property type="match status" value="1"/>
</dbReference>
<dbReference type="Gene3D" id="2.40.30.10">
    <property type="entry name" value="Translation factors"/>
    <property type="match status" value="1"/>
</dbReference>
<dbReference type="HAMAP" id="MF_01325_B">
    <property type="entry name" value="Ribosomal_uL3_B"/>
    <property type="match status" value="1"/>
</dbReference>
<dbReference type="InterPro" id="IPR000597">
    <property type="entry name" value="Ribosomal_uL3"/>
</dbReference>
<dbReference type="InterPro" id="IPR019927">
    <property type="entry name" value="Ribosomal_uL3_bac/org-type"/>
</dbReference>
<dbReference type="InterPro" id="IPR009000">
    <property type="entry name" value="Transl_B-barrel_sf"/>
</dbReference>
<dbReference type="NCBIfam" id="TIGR03625">
    <property type="entry name" value="L3_bact"/>
    <property type="match status" value="1"/>
</dbReference>
<dbReference type="PANTHER" id="PTHR11229">
    <property type="entry name" value="50S RIBOSOMAL PROTEIN L3"/>
    <property type="match status" value="1"/>
</dbReference>
<dbReference type="PANTHER" id="PTHR11229:SF16">
    <property type="entry name" value="LARGE RIBOSOMAL SUBUNIT PROTEIN UL3C"/>
    <property type="match status" value="1"/>
</dbReference>
<dbReference type="Pfam" id="PF00297">
    <property type="entry name" value="Ribosomal_L3"/>
    <property type="match status" value="1"/>
</dbReference>
<dbReference type="SUPFAM" id="SSF50447">
    <property type="entry name" value="Translation proteins"/>
    <property type="match status" value="1"/>
</dbReference>
<accession>B3WAL7</accession>
<proteinExistence type="inferred from homology"/>
<reference key="1">
    <citation type="submission" date="2008-06" db="EMBL/GenBank/DDBJ databases">
        <title>Lactobacillus casei BL23 complete genome sequence.</title>
        <authorList>
            <person name="Maze A."/>
            <person name="Boel G."/>
            <person name="Bourand A."/>
            <person name="Loux V."/>
            <person name="Gibrat J.F."/>
            <person name="Zuniga M."/>
            <person name="Hartke A."/>
            <person name="Deutscher J."/>
        </authorList>
    </citation>
    <scope>NUCLEOTIDE SEQUENCE [LARGE SCALE GENOMIC DNA]</scope>
    <source>
        <strain>BL23</strain>
    </source>
</reference>
<protein>
    <recommendedName>
        <fullName evidence="1">Large ribosomal subunit protein uL3</fullName>
    </recommendedName>
    <alternativeName>
        <fullName evidence="3">50S ribosomal protein L3</fullName>
    </alternativeName>
</protein>
<feature type="chain" id="PRO_1000141879" description="Large ribosomal subunit protein uL3">
    <location>
        <begin position="1"/>
        <end position="210"/>
    </location>
</feature>
<feature type="region of interest" description="Disordered" evidence="2">
    <location>
        <begin position="119"/>
        <end position="143"/>
    </location>
</feature>
<name>RL3_LACCB</name>
<evidence type="ECO:0000255" key="1">
    <source>
        <dbReference type="HAMAP-Rule" id="MF_01325"/>
    </source>
</evidence>
<evidence type="ECO:0000256" key="2">
    <source>
        <dbReference type="SAM" id="MobiDB-lite"/>
    </source>
</evidence>
<evidence type="ECO:0000305" key="3"/>
<organism>
    <name type="scientific">Lacticaseibacillus casei (strain BL23)</name>
    <name type="common">Lactobacillus casei</name>
    <dbReference type="NCBI Taxonomy" id="543734"/>
    <lineage>
        <taxon>Bacteria</taxon>
        <taxon>Bacillati</taxon>
        <taxon>Bacillota</taxon>
        <taxon>Bacilli</taxon>
        <taxon>Lactobacillales</taxon>
        <taxon>Lactobacillaceae</taxon>
        <taxon>Lacticaseibacillus</taxon>
    </lineage>
</organism>
<gene>
    <name evidence="1" type="primary">rplC</name>
    <name type="ordered locus">LCABL_26700</name>
</gene>